<dbReference type="EMBL" id="AF214937">
    <property type="protein sequence ID" value="AAG60365.1"/>
    <property type="molecule type" value="mRNA"/>
</dbReference>
<dbReference type="ConoServer" id="624">
    <property type="toxin name" value="Vn3.3 precursor"/>
</dbReference>
<dbReference type="GO" id="GO:0005576">
    <property type="term" value="C:extracellular region"/>
    <property type="evidence" value="ECO:0007669"/>
    <property type="project" value="UniProtKB-SubCell"/>
</dbReference>
<dbReference type="GO" id="GO:0008200">
    <property type="term" value="F:ion channel inhibitor activity"/>
    <property type="evidence" value="ECO:0007669"/>
    <property type="project" value="InterPro"/>
</dbReference>
<dbReference type="GO" id="GO:0090729">
    <property type="term" value="F:toxin activity"/>
    <property type="evidence" value="ECO:0007669"/>
    <property type="project" value="UniProtKB-KW"/>
</dbReference>
<dbReference type="InterPro" id="IPR017896">
    <property type="entry name" value="4Fe4S_Fe-S-bd"/>
</dbReference>
<dbReference type="InterPro" id="IPR004214">
    <property type="entry name" value="Conotoxin"/>
</dbReference>
<dbReference type="Pfam" id="PF02950">
    <property type="entry name" value="Conotoxin"/>
    <property type="match status" value="1"/>
</dbReference>
<comment type="subcellular location">
    <subcellularLocation>
        <location evidence="1">Secreted</location>
    </subcellularLocation>
</comment>
<comment type="tissue specificity">
    <text>Expressed by the venom duct.</text>
</comment>
<comment type="domain">
    <text>The cysteine framework is III (CC-C-C-CC). Classified in the M-2 branch, since 2 residues stand between the fourth and the fifth cysteine residues.</text>
</comment>
<comment type="similarity">
    <text evidence="4">Belongs to the conotoxin M superfamily.</text>
</comment>
<reference key="1">
    <citation type="journal article" date="2001" name="Mol. Biol. Evol.">
        <title>Mechanisms for evolving hypervariability: the case of conopeptides.</title>
        <authorList>
            <person name="Conticello S.G."/>
            <person name="Gilad Y."/>
            <person name="Avidan N."/>
            <person name="Ben-Asher E."/>
            <person name="Levy Z."/>
            <person name="Fainzilber M."/>
        </authorList>
    </citation>
    <scope>NUCLEOTIDE SEQUENCE [MRNA]</scope>
    <source>
        <tissue>Venom duct</tissue>
    </source>
</reference>
<accession>Q9BPI7</accession>
<keyword id="KW-0165">Cleavage on pair of basic residues</keyword>
<keyword id="KW-1015">Disulfide bond</keyword>
<keyword id="KW-0379">Hydroxylation</keyword>
<keyword id="KW-0528">Neurotoxin</keyword>
<keyword id="KW-0964">Secreted</keyword>
<keyword id="KW-0732">Signal</keyword>
<keyword id="KW-0800">Toxin</keyword>
<protein>
    <recommendedName>
        <fullName>Conotoxin VnMMSK-03</fullName>
    </recommendedName>
</protein>
<evidence type="ECO:0000250" key="1"/>
<evidence type="ECO:0000250" key="2">
    <source>
        <dbReference type="UniProtKB" id="P0CI24"/>
    </source>
</evidence>
<evidence type="ECO:0000255" key="3"/>
<evidence type="ECO:0000305" key="4"/>
<organism>
    <name type="scientific">Conus ventricosus</name>
    <name type="common">Mediterranean cone</name>
    <dbReference type="NCBI Taxonomy" id="117992"/>
    <lineage>
        <taxon>Eukaryota</taxon>
        <taxon>Metazoa</taxon>
        <taxon>Spiralia</taxon>
        <taxon>Lophotrochozoa</taxon>
        <taxon>Mollusca</taxon>
        <taxon>Gastropoda</taxon>
        <taxon>Caenogastropoda</taxon>
        <taxon>Neogastropoda</taxon>
        <taxon>Conoidea</taxon>
        <taxon>Conidae</taxon>
        <taxon>Conus</taxon>
        <taxon>Lautoconus</taxon>
    </lineage>
</organism>
<name>M233_CONVE</name>
<sequence length="67" mass="7530">MMSKLGVVLTICLLPFPLTALPMDGDQPADLPALRTQDFEPERSPWFDPVKRCCSQDCRVCIPCCPY</sequence>
<feature type="signal peptide" evidence="3">
    <location>
        <begin position="1"/>
        <end position="20"/>
    </location>
</feature>
<feature type="propeptide" id="PRO_0000404900" evidence="1">
    <location>
        <begin position="21"/>
        <end position="50"/>
    </location>
</feature>
<feature type="peptide" id="PRO_0000404901" description="Conotoxin VnMMSK-03">
    <location>
        <begin position="53"/>
        <end position="67"/>
    </location>
</feature>
<feature type="modified residue" description="4-hydroxyproline" evidence="1">
    <location>
        <position position="63"/>
    </location>
</feature>
<feature type="disulfide bond" evidence="2">
    <location>
        <begin position="53"/>
        <end position="65"/>
    </location>
</feature>
<feature type="disulfide bond" evidence="2">
    <location>
        <begin position="54"/>
        <end position="61"/>
    </location>
</feature>
<feature type="disulfide bond" evidence="2">
    <location>
        <begin position="58"/>
        <end position="64"/>
    </location>
</feature>
<proteinExistence type="evidence at transcript level"/>